<dbReference type="EMBL" id="JQ513643">
    <property type="protein sequence ID" value="AFX65328.1"/>
    <property type="molecule type" value="mRNA"/>
</dbReference>
<dbReference type="SMR" id="B3EWF3"/>
<dbReference type="TCDB" id="8.B.19.2.5">
    <property type="family name" value="the sea anemone k+ channel blocker toxin, bcstx3 (bcstx3) family"/>
</dbReference>
<dbReference type="ArachnoServer" id="AS001850">
    <property type="toxin name" value="U1-zodatoxin-Lt1b"/>
</dbReference>
<dbReference type="GO" id="GO:0005576">
    <property type="term" value="C:extracellular region"/>
    <property type="evidence" value="ECO:0007669"/>
    <property type="project" value="UniProtKB-SubCell"/>
</dbReference>
<dbReference type="GO" id="GO:0090729">
    <property type="term" value="F:toxin activity"/>
    <property type="evidence" value="ECO:0007669"/>
    <property type="project" value="UniProtKB-KW"/>
</dbReference>
<dbReference type="InterPro" id="IPR019553">
    <property type="entry name" value="Spider_toxin_CSTX_knottin"/>
</dbReference>
<dbReference type="Pfam" id="PF10530">
    <property type="entry name" value="Toxin_35"/>
    <property type="match status" value="1"/>
</dbReference>
<protein>
    <recommendedName>
        <fullName evidence="6">Latartoxin-1b</fullName>
        <shortName evidence="6">LtTx-1b</shortName>
    </recommendedName>
</protein>
<feature type="signal peptide" evidence="3">
    <location>
        <begin position="1"/>
        <end position="19"/>
    </location>
</feature>
<feature type="propeptide" id="PRO_0000421843" description="Removed in mature form" evidence="4">
    <location>
        <begin position="20"/>
        <end position="26"/>
    </location>
</feature>
<feature type="peptide" id="PRO_0000421844" description="Latartoxin-1b">
    <location>
        <begin position="27"/>
        <end position="86"/>
    </location>
</feature>
<feature type="short sequence motif" description="Processing quadruplet motif" evidence="7">
    <location>
        <begin position="23"/>
        <end position="26"/>
    </location>
</feature>
<feature type="disulfide bond" evidence="2">
    <location>
        <begin position="28"/>
        <end position="43"/>
    </location>
</feature>
<feature type="disulfide bond" evidence="2">
    <location>
        <begin position="35"/>
        <end position="48"/>
    </location>
</feature>
<feature type="disulfide bond" evidence="2">
    <location>
        <begin position="42"/>
        <end position="65"/>
    </location>
</feature>
<feature type="disulfide bond" evidence="2">
    <location>
        <begin position="50"/>
        <end position="63"/>
    </location>
</feature>
<name>LTX1B_LACTA</name>
<keyword id="KW-0903">Direct protein sequencing</keyword>
<keyword id="KW-1015">Disulfide bond</keyword>
<keyword id="KW-0960">Knottin</keyword>
<keyword id="KW-0964">Secreted</keyword>
<keyword id="KW-0732">Signal</keyword>
<keyword id="KW-0800">Toxin</keyword>
<reference key="1">
    <citation type="journal article" date="2013" name="Biochim. Biophys. Acta">
        <title>Cysteine-rich toxins from Lachesana tarabaevi spider venom with amphiphilic C-terminal segments.</title>
        <authorList>
            <person name="Kuzmenkov A.I."/>
            <person name="Fedorova I.M."/>
            <person name="Vassilevski A.A."/>
            <person name="Grishin E.V."/>
        </authorList>
    </citation>
    <scope>NUCLEOTIDE SEQUENCE [MRNA]</scope>
    <scope>PROTEIN SEQUENCE OF 27-86</scope>
    <scope>FUNCTION</scope>
    <scope>SUBCELLULAR LOCATION</scope>
    <scope>DISULFIDE BONDS</scope>
    <scope>MASS SPECTROMETRY</scope>
    <scope>TOXIC DOSE</scope>
    <source>
        <tissue>Venom</tissue>
        <tissue>Venom gland</tissue>
    </source>
</reference>
<reference key="2">
    <citation type="journal article" date="2016" name="Biochem. J.">
        <title>Lachesana tarabaevi, an expert in membrane-active toxins.</title>
        <authorList>
            <person name="Kuzmenkov A.I."/>
            <person name="Sachkova M.Y."/>
            <person name="Kovalchuk S.I."/>
            <person name="Grishin E.V."/>
            <person name="Vassilevski A.A."/>
        </authorList>
    </citation>
    <scope>SUBCELLULAR LOCATION</scope>
    <scope>PQM MOTIF</scope>
    <scope>MASS SPECTROMETRY</scope>
    <source>
        <tissue>Venom</tissue>
    </source>
</reference>
<accession>B3EWF3</accession>
<accession>K7XJP8</accession>
<evidence type="ECO:0000250" key="1">
    <source>
        <dbReference type="UniProtKB" id="B3EWF2"/>
    </source>
</evidence>
<evidence type="ECO:0000250" key="2">
    <source>
        <dbReference type="UniProtKB" id="P58604"/>
    </source>
</evidence>
<evidence type="ECO:0000255" key="3"/>
<evidence type="ECO:0000269" key="4">
    <source>
    </source>
</evidence>
<evidence type="ECO:0000269" key="5">
    <source>
    </source>
</evidence>
<evidence type="ECO:0000303" key="6">
    <source>
    </source>
</evidence>
<evidence type="ECO:0000303" key="7">
    <source>
    </source>
</evidence>
<evidence type="ECO:0000305" key="8"/>
<evidence type="ECO:0000305" key="9">
    <source>
    </source>
</evidence>
<comment type="function">
    <text evidence="4">Insect toxin.</text>
</comment>
<comment type="subcellular location">
    <subcellularLocation>
        <location evidence="4 5">Secreted</location>
    </subcellularLocation>
</comment>
<comment type="tissue specificity">
    <text evidence="9">Expressed by the venom gland.</text>
</comment>
<comment type="domain">
    <text evidence="8">The presence of a 'disulfide through disulfide knot' structurally defines this protein as a knottin.</text>
</comment>
<comment type="domain">
    <text evidence="1">The C-terminal part (65-85) forms an alpha-helix which probably disrupts target membranes.</text>
</comment>
<comment type="PTM">
    <text evidence="4">Contains 4 disulfide bonds.</text>
</comment>
<comment type="PTM">
    <text evidence="7">Cleavage of the propeptide depends on the processing quadruplet motif (XXXR, with at least one of X being E).</text>
</comment>
<comment type="mass spectrometry"/>
<comment type="mass spectrometry"/>
<comment type="toxic dose">
    <text evidence="4">LD(50) is 45 ug/g in flesh fly larvae (S.carnaria).</text>
</comment>
<comment type="toxic dose">
    <text evidence="4">LD(50) is 45 ug/g in house crickets (Acheta domesticus).</text>
</comment>
<comment type="similarity">
    <text evidence="3">Belongs to the neurotoxin 19 (CSTX) family.</text>
</comment>
<organism>
    <name type="scientific">Lachesana tarabaevi</name>
    <name type="common">Spider</name>
    <dbReference type="NCBI Taxonomy" id="379576"/>
    <lineage>
        <taxon>Eukaryota</taxon>
        <taxon>Metazoa</taxon>
        <taxon>Ecdysozoa</taxon>
        <taxon>Arthropoda</taxon>
        <taxon>Chelicerata</taxon>
        <taxon>Arachnida</taxon>
        <taxon>Araneae</taxon>
        <taxon>Araneomorphae</taxon>
        <taxon>Entelegynae</taxon>
        <taxon>Entelegynae incertae sedis</taxon>
        <taxon>Zodariidae</taxon>
        <taxon>Lachesana</taxon>
    </lineage>
</organism>
<sequence>MKILVLAVVCTVLLQVALSADSEEVRDCIPTRHECTNNQQNCCEGHDCKCDYTEIGGAKKEICYCKKTLWQKTKDKLSTAGDILKS</sequence>
<proteinExistence type="evidence at protein level"/>